<feature type="chain" id="PRO_0000372985" description="Non-structural protein 1">
    <location>
        <begin position="1"/>
        <end position="237"/>
    </location>
</feature>
<feature type="region of interest" description="RNA-binding and homodimerization" evidence="1">
    <location>
        <begin position="1"/>
        <end position="73"/>
    </location>
</feature>
<feature type="region of interest" description="CPSF4-binding" evidence="1">
    <location>
        <begin position="180"/>
        <end position="215"/>
    </location>
</feature>
<feature type="region of interest" description="Disordered" evidence="2">
    <location>
        <begin position="205"/>
        <end position="237"/>
    </location>
</feature>
<feature type="region of interest" description="PABPN1-binding" evidence="1">
    <location>
        <begin position="223"/>
        <end position="230"/>
    </location>
</feature>
<feature type="short sequence motif" description="Nuclear localization signal" evidence="1">
    <location>
        <begin position="34"/>
        <end position="38"/>
    </location>
</feature>
<feature type="short sequence motif" description="Nuclear export signal" evidence="1">
    <location>
        <begin position="137"/>
        <end position="146"/>
    </location>
</feature>
<feature type="compositionally biased region" description="Basic and acidic residues" evidence="2">
    <location>
        <begin position="226"/>
        <end position="237"/>
    </location>
</feature>
<organismHost>
    <name type="scientific">Aves</name>
    <dbReference type="NCBI Taxonomy" id="8782"/>
</organismHost>
<organismHost>
    <name type="scientific">Homo sapiens</name>
    <name type="common">Human</name>
    <dbReference type="NCBI Taxonomy" id="9606"/>
</organismHost>
<organismHost>
    <name type="scientific">Sus scrofa</name>
    <name type="common">Pig</name>
    <dbReference type="NCBI Taxonomy" id="9823"/>
</organismHost>
<protein>
    <recommendedName>
        <fullName evidence="1">Non-structural protein 1</fullName>
        <shortName evidence="1">NS1</shortName>
    </recommendedName>
    <alternativeName>
        <fullName evidence="1">NS1A</fullName>
    </alternativeName>
</protein>
<accession>A4U7B2</accession>
<evidence type="ECO:0000255" key="1">
    <source>
        <dbReference type="HAMAP-Rule" id="MF_04066"/>
    </source>
</evidence>
<evidence type="ECO:0000256" key="2">
    <source>
        <dbReference type="SAM" id="MobiDB-lite"/>
    </source>
</evidence>
<reference key="1">
    <citation type="submission" date="2007-04" db="EMBL/GenBank/DDBJ databases">
        <title>The NIAID influenza genome sequencing project.</title>
        <authorList>
            <person name="Spiro D."/>
            <person name="Sengamalay N."/>
            <person name="Boyne A."/>
            <person name="Bera J."/>
            <person name="Ghedin E."/>
            <person name="Zaborsky J."/>
            <person name="Subbu V."/>
            <person name="Sparenborg J."/>
            <person name="Gallagher T."/>
            <person name="Overton L."/>
            <person name="Althoff R."/>
            <person name="Liu X."/>
            <person name="Sitz J."/>
            <person name="Katzel D."/>
            <person name="Neupane R."/>
            <person name="Shumway M."/>
            <person name="Koo H."/>
            <person name="Griesemer S."/>
            <person name="StGeorge K."/>
            <person name="Bennett R."/>
            <person name="Taylor J."/>
            <person name="Bao Y."/>
            <person name="Bolotov P."/>
            <person name="Dernovoy D."/>
            <person name="Kiryutin B."/>
            <person name="Lipman D.J."/>
            <person name="Tatusova T."/>
        </authorList>
    </citation>
    <scope>NUCLEOTIDE SEQUENCE [GENOMIC RNA]</scope>
</reference>
<reference key="2">
    <citation type="submission" date="2007-04" db="EMBL/GenBank/DDBJ databases">
        <authorList>
            <consortium name="The NIAID Influenza Genome Sequencing Consortium"/>
        </authorList>
    </citation>
    <scope>NUCLEOTIDE SEQUENCE [GENOMIC RNA]</scope>
</reference>
<sequence length="237" mass="26943">MDPNTVSSFQVDCFLWHVRKQVADQELGDAPFLDRLRRDQKSLRGRGSTLGLNIETATRVGKQIVERILKEESDEALKMTMASAPASRYLTDMTIEEMSRDWFMLMPKQKVAGPLCIRMDQAIMDKNIILKANFSVIFDRLETLILLRAFTEEGAIVGEISPLPSLPGHTNEDVKNAIGVLIGGLEWNDNTVRVSKTLQRFAWRSSNENGRPPLTPKQKRKMARTIRSEVRRNKMAD</sequence>
<keyword id="KW-0025">Alternative splicing</keyword>
<keyword id="KW-1262">Eukaryotic host gene expression shutoff by virus</keyword>
<keyword id="KW-1035">Host cytoplasm</keyword>
<keyword id="KW-1190">Host gene expression shutoff by virus</keyword>
<keyword id="KW-1192">Host mRNA suppression by virus</keyword>
<keyword id="KW-1048">Host nucleus</keyword>
<keyword id="KW-0945">Host-virus interaction</keyword>
<keyword id="KW-1090">Inhibition of host innate immune response by virus</keyword>
<keyword id="KW-1114">Inhibition of host interferon signaling pathway by virus</keyword>
<keyword id="KW-1102">Inhibition of host PKR by virus</keyword>
<keyword id="KW-1103">Inhibition of host pre-mRNA processing by virus</keyword>
<keyword id="KW-1088">Inhibition of host RIG-I by virus</keyword>
<keyword id="KW-1113">Inhibition of host RLR pathway by virus</keyword>
<keyword id="KW-0922">Interferon antiviral system evasion</keyword>
<keyword id="KW-0694">RNA-binding</keyword>
<keyword id="KW-0832">Ubl conjugation</keyword>
<keyword id="KW-0899">Viral immunoevasion</keyword>
<dbReference type="EMBL" id="CY021825">
    <property type="protein sequence ID" value="ABP49486.1"/>
    <property type="molecule type" value="Viral_cRNA"/>
</dbReference>
<dbReference type="SMR" id="A4U7B2"/>
<dbReference type="Proteomes" id="UP000007556">
    <property type="component" value="Genome"/>
</dbReference>
<dbReference type="GO" id="GO:0030430">
    <property type="term" value="C:host cell cytoplasm"/>
    <property type="evidence" value="ECO:0007669"/>
    <property type="project" value="UniProtKB-SubCell"/>
</dbReference>
<dbReference type="GO" id="GO:0042025">
    <property type="term" value="C:host cell nucleus"/>
    <property type="evidence" value="ECO:0007669"/>
    <property type="project" value="UniProtKB-SubCell"/>
</dbReference>
<dbReference type="GO" id="GO:0030291">
    <property type="term" value="F:protein serine/threonine kinase inhibitor activity"/>
    <property type="evidence" value="ECO:0007669"/>
    <property type="project" value="UniProtKB-KW"/>
</dbReference>
<dbReference type="GO" id="GO:0003723">
    <property type="term" value="F:RNA binding"/>
    <property type="evidence" value="ECO:0007669"/>
    <property type="project" value="UniProtKB-KW"/>
</dbReference>
<dbReference type="GO" id="GO:0039540">
    <property type="term" value="P:symbiont-mediated suppression of host cytoplasmic pattern recognition receptor signaling pathway via inhibition of RIG-I activity"/>
    <property type="evidence" value="ECO:0007669"/>
    <property type="project" value="UniProtKB-KW"/>
</dbReference>
<dbReference type="GO" id="GO:0039657">
    <property type="term" value="P:symbiont-mediated suppression of host gene expression"/>
    <property type="evidence" value="ECO:0007669"/>
    <property type="project" value="UniProtKB-KW"/>
</dbReference>
<dbReference type="GO" id="GO:0039524">
    <property type="term" value="P:symbiont-mediated suppression of host mRNA processing"/>
    <property type="evidence" value="ECO:0007669"/>
    <property type="project" value="UniProtKB-KW"/>
</dbReference>
<dbReference type="GO" id="GO:0039580">
    <property type="term" value="P:symbiont-mediated suppression of host PKR/eIFalpha signaling"/>
    <property type="evidence" value="ECO:0007669"/>
    <property type="project" value="UniProtKB-KW"/>
</dbReference>
<dbReference type="GO" id="GO:0039502">
    <property type="term" value="P:symbiont-mediated suppression of host type I interferon-mediated signaling pathway"/>
    <property type="evidence" value="ECO:0007669"/>
    <property type="project" value="UniProtKB-KW"/>
</dbReference>
<dbReference type="FunFam" id="1.10.287.10:FF:000001">
    <property type="entry name" value="Non-structural protein 1"/>
    <property type="match status" value="1"/>
</dbReference>
<dbReference type="FunFam" id="3.30.420.330:FF:000001">
    <property type="entry name" value="Non-structural protein 1"/>
    <property type="match status" value="1"/>
</dbReference>
<dbReference type="Gene3D" id="3.30.420.330">
    <property type="entry name" value="Influenza virus non-structural protein, effector domain"/>
    <property type="match status" value="1"/>
</dbReference>
<dbReference type="Gene3D" id="1.10.287.10">
    <property type="entry name" value="S15/NS1, RNA-binding"/>
    <property type="match status" value="1"/>
</dbReference>
<dbReference type="HAMAP" id="MF_04066">
    <property type="entry name" value="INFV_NS1"/>
    <property type="match status" value="1"/>
</dbReference>
<dbReference type="InterPro" id="IPR004208">
    <property type="entry name" value="NS1"/>
</dbReference>
<dbReference type="InterPro" id="IPR000256">
    <property type="entry name" value="NS1A"/>
</dbReference>
<dbReference type="InterPro" id="IPR038064">
    <property type="entry name" value="NS1A_effect_dom-like_sf"/>
</dbReference>
<dbReference type="InterPro" id="IPR009068">
    <property type="entry name" value="uS15_NS1_RNA-bd_sf"/>
</dbReference>
<dbReference type="Pfam" id="PF00600">
    <property type="entry name" value="Flu_NS1"/>
    <property type="match status" value="1"/>
</dbReference>
<dbReference type="SUPFAM" id="SSF143021">
    <property type="entry name" value="Ns1 effector domain-like"/>
    <property type="match status" value="1"/>
</dbReference>
<dbReference type="SUPFAM" id="SSF47060">
    <property type="entry name" value="S15/NS1 RNA-binding domain"/>
    <property type="match status" value="1"/>
</dbReference>
<organism>
    <name type="scientific">Influenza A virus (strain A/USA:Albany/12/1951 H1N1)</name>
    <dbReference type="NCBI Taxonomy" id="425580"/>
    <lineage>
        <taxon>Viruses</taxon>
        <taxon>Riboviria</taxon>
        <taxon>Orthornavirae</taxon>
        <taxon>Negarnaviricota</taxon>
        <taxon>Polyploviricotina</taxon>
        <taxon>Insthoviricetes</taxon>
        <taxon>Articulavirales</taxon>
        <taxon>Orthomyxoviridae</taxon>
        <taxon>Alphainfluenzavirus</taxon>
        <taxon>Alphainfluenzavirus influenzae</taxon>
        <taxon>Influenza A virus</taxon>
    </lineage>
</organism>
<gene>
    <name evidence="1" type="primary">NS</name>
</gene>
<comment type="function">
    <text evidence="1">Inhibits post-transcriptional processing of cellular pre-mRNA, by binding and inhibiting two cellular proteins that are required for the 3'-end processing of cellular pre-mRNAs: the 30 kDa cleavage and polyadenylation specificity factor/CPSF4 and the poly(A)-binding protein 2/PABPN1. In turn, unprocessed 3' end pre-mRNAs accumulate in the host nucleus and are no longer exported to the cytoplasm. Cellular protein synthesis is thereby shut off very early after virus infection. Viral protein synthesis is not affected by the inhibition of the cellular 3' end processing machinery because the poly(A) tails of viral mRNAs are produced by the viral polymerase through a stuttering mechanism. Prevents the establishment of the cellular antiviral state by inhibiting TRIM25-mediated RIGI ubiquitination, which normally triggers the antiviral transduction signal that leads to the activation of type I IFN genes by transcription factors IRF3 and IRF7. Also binds poly(A) and U6 snRNA. Inhibits the integrated stress response (ISR) in the infected cell by blocking dsRNA binding by EIF2AK2/PKR and further phosphorylation of EIF2S1/EIF-2ALPHA. Stress granule formation is thus inhibited, which allows protein synthesis and viral replication.</text>
</comment>
<comment type="subunit">
    <text evidence="1">Homodimer. Interacts with host TRIM25 (via coiled coil); this interaction specifically inhibits TRIM25 multimerization and TRIM25-mediated RIGI CARD ubiquitination. Interacts with human EIF2AK2/PKR, CPSF4, IVNS1ABP and PABPN1.</text>
</comment>
<comment type="subcellular location">
    <subcellularLocation>
        <location evidence="1">Host nucleus</location>
    </subcellularLocation>
    <subcellularLocation>
        <location evidence="1">Host cytoplasm</location>
    </subcellularLocation>
    <text evidence="1">In uninfected, transfected cells, NS1 is localized in the nucleus. Only in virus infected cells, the nuclear export signal is unveiled, presumably by a viral protein, and a fraction of NS1 is exported in the cytoplasm.</text>
</comment>
<comment type="alternative products">
    <event type="alternative splicing"/>
    <isoform>
        <id>A4U7B2-1</id>
        <name>NS1</name>
        <sequence type="displayed"/>
    </isoform>
    <isoform>
        <id>A4U7B1-1</id>
        <name>NEP</name>
        <name>NS2</name>
        <sequence type="external"/>
    </isoform>
</comment>
<comment type="domain">
    <text evidence="1">The dsRNA-binding region is required for suppression of RNA silencing.</text>
</comment>
<comment type="PTM">
    <text evidence="1">Upon interferon induction, ISGylated via host HERC5; this results in the impairment of NS1 interaction with RNA targets due to its inability to form homodimers and to interact with host EIF2AK2/PKR.</text>
</comment>
<comment type="similarity">
    <text evidence="1">Belongs to the influenza A viruses NS1 family.</text>
</comment>
<proteinExistence type="inferred from homology"/>
<name>NS1_I51A0</name>